<dbReference type="EC" id="3.6.4.13"/>
<dbReference type="EMBL" id="AC002291">
    <property type="protein sequence ID" value="AAC00620.1"/>
    <property type="molecule type" value="Genomic_DNA"/>
</dbReference>
<dbReference type="EMBL" id="CP002684">
    <property type="protein sequence ID" value="AEE35927.1"/>
    <property type="molecule type" value="Genomic_DNA"/>
</dbReference>
<dbReference type="PIR" id="D96799">
    <property type="entry name" value="D96799"/>
</dbReference>
<dbReference type="RefSeq" id="NP_177829.5">
    <property type="nucleotide sequence ID" value="NM_106354.6"/>
</dbReference>
<dbReference type="SMR" id="O49289"/>
<dbReference type="FunCoup" id="O49289">
    <property type="interactions" value="4197"/>
</dbReference>
<dbReference type="STRING" id="3702.O49289"/>
<dbReference type="PaxDb" id="3702-AT1G77030.1"/>
<dbReference type="ProteomicsDB" id="236929"/>
<dbReference type="EnsemblPlants" id="AT1G77030.1">
    <property type="protein sequence ID" value="AT1G77030.1"/>
    <property type="gene ID" value="AT1G77030"/>
</dbReference>
<dbReference type="GeneID" id="844039"/>
<dbReference type="Gramene" id="AT1G77030.1">
    <property type="protein sequence ID" value="AT1G77030.1"/>
    <property type="gene ID" value="AT1G77030"/>
</dbReference>
<dbReference type="KEGG" id="ath:AT1G77030"/>
<dbReference type="Araport" id="AT1G77030"/>
<dbReference type="TAIR" id="AT1G77030"/>
<dbReference type="eggNOG" id="KOG0337">
    <property type="taxonomic scope" value="Eukaryota"/>
</dbReference>
<dbReference type="HOGENOM" id="CLU_003041_5_2_1"/>
<dbReference type="InParanoid" id="O49289"/>
<dbReference type="OMA" id="EDQFGMM"/>
<dbReference type="PhylomeDB" id="O49289"/>
<dbReference type="CD-CODE" id="4299E36E">
    <property type="entry name" value="Nucleolus"/>
</dbReference>
<dbReference type="PRO" id="PR:O49289"/>
<dbReference type="Proteomes" id="UP000006548">
    <property type="component" value="Chromosome 1"/>
</dbReference>
<dbReference type="ExpressionAtlas" id="O49289">
    <property type="expression patterns" value="baseline and differential"/>
</dbReference>
<dbReference type="GO" id="GO:0005634">
    <property type="term" value="C:nucleus"/>
    <property type="evidence" value="ECO:0007669"/>
    <property type="project" value="InterPro"/>
</dbReference>
<dbReference type="GO" id="GO:0005524">
    <property type="term" value="F:ATP binding"/>
    <property type="evidence" value="ECO:0007669"/>
    <property type="project" value="UniProtKB-KW"/>
</dbReference>
<dbReference type="GO" id="GO:0016887">
    <property type="term" value="F:ATP hydrolysis activity"/>
    <property type="evidence" value="ECO:0007669"/>
    <property type="project" value="RHEA"/>
</dbReference>
<dbReference type="GO" id="GO:0003729">
    <property type="term" value="F:mRNA binding"/>
    <property type="evidence" value="ECO:0000314"/>
    <property type="project" value="TAIR"/>
</dbReference>
<dbReference type="GO" id="GO:0003724">
    <property type="term" value="F:RNA helicase activity"/>
    <property type="evidence" value="ECO:0007669"/>
    <property type="project" value="UniProtKB-EC"/>
</dbReference>
<dbReference type="CDD" id="cd17959">
    <property type="entry name" value="DEADc_DDX54"/>
    <property type="match status" value="1"/>
</dbReference>
<dbReference type="CDD" id="cd18787">
    <property type="entry name" value="SF2_C_DEAD"/>
    <property type="match status" value="1"/>
</dbReference>
<dbReference type="Gene3D" id="3.40.50.300">
    <property type="entry name" value="P-loop containing nucleotide triphosphate hydrolases"/>
    <property type="match status" value="2"/>
</dbReference>
<dbReference type="InterPro" id="IPR012541">
    <property type="entry name" value="DBP10_C"/>
</dbReference>
<dbReference type="InterPro" id="IPR033517">
    <property type="entry name" value="DDX54/DBP10_DEAD-box_helicase"/>
</dbReference>
<dbReference type="InterPro" id="IPR011545">
    <property type="entry name" value="DEAD/DEAH_box_helicase_dom"/>
</dbReference>
<dbReference type="InterPro" id="IPR050079">
    <property type="entry name" value="DEAD_box_RNA_helicase"/>
</dbReference>
<dbReference type="InterPro" id="IPR014001">
    <property type="entry name" value="Helicase_ATP-bd"/>
</dbReference>
<dbReference type="InterPro" id="IPR001650">
    <property type="entry name" value="Helicase_C-like"/>
</dbReference>
<dbReference type="InterPro" id="IPR027417">
    <property type="entry name" value="P-loop_NTPase"/>
</dbReference>
<dbReference type="InterPro" id="IPR014014">
    <property type="entry name" value="RNA_helicase_DEAD_Q_motif"/>
</dbReference>
<dbReference type="PANTHER" id="PTHR47959">
    <property type="entry name" value="ATP-DEPENDENT RNA HELICASE RHLE-RELATED"/>
    <property type="match status" value="1"/>
</dbReference>
<dbReference type="PANTHER" id="PTHR47959:SF8">
    <property type="entry name" value="RNA HELICASE"/>
    <property type="match status" value="1"/>
</dbReference>
<dbReference type="Pfam" id="PF08147">
    <property type="entry name" value="DBP10CT"/>
    <property type="match status" value="1"/>
</dbReference>
<dbReference type="Pfam" id="PF00270">
    <property type="entry name" value="DEAD"/>
    <property type="match status" value="1"/>
</dbReference>
<dbReference type="Pfam" id="PF00271">
    <property type="entry name" value="Helicase_C"/>
    <property type="match status" value="1"/>
</dbReference>
<dbReference type="SMART" id="SM01123">
    <property type="entry name" value="DBP10CT"/>
    <property type="match status" value="1"/>
</dbReference>
<dbReference type="SMART" id="SM00487">
    <property type="entry name" value="DEXDc"/>
    <property type="match status" value="1"/>
</dbReference>
<dbReference type="SMART" id="SM00490">
    <property type="entry name" value="HELICc"/>
    <property type="match status" value="1"/>
</dbReference>
<dbReference type="SUPFAM" id="SSF52540">
    <property type="entry name" value="P-loop containing nucleoside triphosphate hydrolases"/>
    <property type="match status" value="1"/>
</dbReference>
<dbReference type="PROSITE" id="PS51192">
    <property type="entry name" value="HELICASE_ATP_BIND_1"/>
    <property type="match status" value="1"/>
</dbReference>
<dbReference type="PROSITE" id="PS51194">
    <property type="entry name" value="HELICASE_CTER"/>
    <property type="match status" value="1"/>
</dbReference>
<dbReference type="PROSITE" id="PS51195">
    <property type="entry name" value="Q_MOTIF"/>
    <property type="match status" value="1"/>
</dbReference>
<feature type="chain" id="PRO_0000239169" description="Putative DEAD-box ATP-dependent RNA helicase 29">
    <location>
        <begin position="1"/>
        <end position="845"/>
    </location>
</feature>
<feature type="domain" description="Helicase ATP-binding" evidence="1">
    <location>
        <begin position="59"/>
        <end position="232"/>
    </location>
</feature>
<feature type="domain" description="Helicase C-terminal" evidence="2">
    <location>
        <begin position="256"/>
        <end position="411"/>
    </location>
</feature>
<feature type="region of interest" description="Disordered" evidence="3">
    <location>
        <begin position="675"/>
        <end position="845"/>
    </location>
</feature>
<feature type="short sequence motif" description="Q motif">
    <location>
        <begin position="28"/>
        <end position="56"/>
    </location>
</feature>
<feature type="short sequence motif" description="DEAD box">
    <location>
        <begin position="180"/>
        <end position="183"/>
    </location>
</feature>
<feature type="compositionally biased region" description="Basic and acidic residues" evidence="3">
    <location>
        <begin position="696"/>
        <end position="716"/>
    </location>
</feature>
<feature type="compositionally biased region" description="Basic and acidic residues" evidence="3">
    <location>
        <begin position="738"/>
        <end position="754"/>
    </location>
</feature>
<feature type="compositionally biased region" description="Gly residues" evidence="3">
    <location>
        <begin position="770"/>
        <end position="799"/>
    </location>
</feature>
<feature type="compositionally biased region" description="Basic and acidic residues" evidence="3">
    <location>
        <begin position="806"/>
        <end position="817"/>
    </location>
</feature>
<feature type="compositionally biased region" description="Basic residues" evidence="3">
    <location>
        <begin position="828"/>
        <end position="845"/>
    </location>
</feature>
<feature type="binding site" evidence="1">
    <location>
        <begin position="72"/>
        <end position="79"/>
    </location>
    <ligand>
        <name>ATP</name>
        <dbReference type="ChEBI" id="CHEBI:30616"/>
    </ligand>
</feature>
<organism>
    <name type="scientific">Arabidopsis thaliana</name>
    <name type="common">Mouse-ear cress</name>
    <dbReference type="NCBI Taxonomy" id="3702"/>
    <lineage>
        <taxon>Eukaryota</taxon>
        <taxon>Viridiplantae</taxon>
        <taxon>Streptophyta</taxon>
        <taxon>Embryophyta</taxon>
        <taxon>Tracheophyta</taxon>
        <taxon>Spermatophyta</taxon>
        <taxon>Magnoliopsida</taxon>
        <taxon>eudicotyledons</taxon>
        <taxon>Gunneridae</taxon>
        <taxon>Pentapetalae</taxon>
        <taxon>rosids</taxon>
        <taxon>malvids</taxon>
        <taxon>Brassicales</taxon>
        <taxon>Brassicaceae</taxon>
        <taxon>Camelineae</taxon>
        <taxon>Arabidopsis</taxon>
    </lineage>
</organism>
<reference key="1">
    <citation type="journal article" date="2000" name="Nature">
        <title>Sequence and analysis of chromosome 1 of the plant Arabidopsis thaliana.</title>
        <authorList>
            <person name="Theologis A."/>
            <person name="Ecker J.R."/>
            <person name="Palm C.J."/>
            <person name="Federspiel N.A."/>
            <person name="Kaul S."/>
            <person name="White O."/>
            <person name="Alonso J."/>
            <person name="Altafi H."/>
            <person name="Araujo R."/>
            <person name="Bowman C.L."/>
            <person name="Brooks S.Y."/>
            <person name="Buehler E."/>
            <person name="Chan A."/>
            <person name="Chao Q."/>
            <person name="Chen H."/>
            <person name="Cheuk R.F."/>
            <person name="Chin C.W."/>
            <person name="Chung M.K."/>
            <person name="Conn L."/>
            <person name="Conway A.B."/>
            <person name="Conway A.R."/>
            <person name="Creasy T.H."/>
            <person name="Dewar K."/>
            <person name="Dunn P."/>
            <person name="Etgu P."/>
            <person name="Feldblyum T.V."/>
            <person name="Feng J.-D."/>
            <person name="Fong B."/>
            <person name="Fujii C.Y."/>
            <person name="Gill J.E."/>
            <person name="Goldsmith A.D."/>
            <person name="Haas B."/>
            <person name="Hansen N.F."/>
            <person name="Hughes B."/>
            <person name="Huizar L."/>
            <person name="Hunter J.L."/>
            <person name="Jenkins J."/>
            <person name="Johnson-Hopson C."/>
            <person name="Khan S."/>
            <person name="Khaykin E."/>
            <person name="Kim C.J."/>
            <person name="Koo H.L."/>
            <person name="Kremenetskaia I."/>
            <person name="Kurtz D.B."/>
            <person name="Kwan A."/>
            <person name="Lam B."/>
            <person name="Langin-Hooper S."/>
            <person name="Lee A."/>
            <person name="Lee J.M."/>
            <person name="Lenz C.A."/>
            <person name="Li J.H."/>
            <person name="Li Y.-P."/>
            <person name="Lin X."/>
            <person name="Liu S.X."/>
            <person name="Liu Z.A."/>
            <person name="Luros J.S."/>
            <person name="Maiti R."/>
            <person name="Marziali A."/>
            <person name="Militscher J."/>
            <person name="Miranda M."/>
            <person name="Nguyen M."/>
            <person name="Nierman W.C."/>
            <person name="Osborne B.I."/>
            <person name="Pai G."/>
            <person name="Peterson J."/>
            <person name="Pham P.K."/>
            <person name="Rizzo M."/>
            <person name="Rooney T."/>
            <person name="Rowley D."/>
            <person name="Sakano H."/>
            <person name="Salzberg S.L."/>
            <person name="Schwartz J.R."/>
            <person name="Shinn P."/>
            <person name="Southwick A.M."/>
            <person name="Sun H."/>
            <person name="Tallon L.J."/>
            <person name="Tambunga G."/>
            <person name="Toriumi M.J."/>
            <person name="Town C.D."/>
            <person name="Utterback T."/>
            <person name="Van Aken S."/>
            <person name="Vaysberg M."/>
            <person name="Vysotskaia V.S."/>
            <person name="Walker M."/>
            <person name="Wu D."/>
            <person name="Yu G."/>
            <person name="Fraser C.M."/>
            <person name="Venter J.C."/>
            <person name="Davis R.W."/>
        </authorList>
    </citation>
    <scope>NUCLEOTIDE SEQUENCE [LARGE SCALE GENOMIC DNA]</scope>
    <source>
        <strain>cv. Columbia</strain>
    </source>
</reference>
<reference key="2">
    <citation type="journal article" date="2017" name="Plant J.">
        <title>Araport11: a complete reannotation of the Arabidopsis thaliana reference genome.</title>
        <authorList>
            <person name="Cheng C.Y."/>
            <person name="Krishnakumar V."/>
            <person name="Chan A.P."/>
            <person name="Thibaud-Nissen F."/>
            <person name="Schobel S."/>
            <person name="Town C.D."/>
        </authorList>
    </citation>
    <scope>GENOME REANNOTATION</scope>
    <source>
        <strain>cv. Columbia</strain>
    </source>
</reference>
<reference key="3">
    <citation type="journal article" date="2004" name="Plant Biotechnol. J.">
        <title>DEAD-box RNA helicases in Arabidopsis thaliana: establishing a link between quantitative expression, gene structure and evolution of a family of genes.</title>
        <authorList>
            <person name="Mingam A."/>
            <person name="Toffano-Nioche C."/>
            <person name="Brunaud V."/>
            <person name="Boudet N."/>
            <person name="Kreis M."/>
            <person name="Lecharny A."/>
        </authorList>
    </citation>
    <scope>GENE FAMILY</scope>
    <scope>NOMENCLATURE</scope>
</reference>
<reference key="4">
    <citation type="journal article" date="2013" name="PLoS ONE">
        <title>Genome-wide comparative in silico analysis of the RNA helicase gene family in Zea mays and Glycine max: a comparison with Arabidopsis and Oryza sativa.</title>
        <authorList>
            <person name="Xu R."/>
            <person name="Zhang S."/>
            <person name="Huang J."/>
            <person name="Zheng C."/>
        </authorList>
    </citation>
    <scope>GENE FAMILY</scope>
</reference>
<name>RH29_ARATH</name>
<sequence length="845" mass="93503">MVEGKGFLVSSVTELHRKEKQKKKGKSGGFESLNLGPNVFNAIKKKGYKVPTPIQRKTMPLILSGVDVVAMARTGSGKTAAFLIPMLEKLKQHVPQGGVRALILSPTRDLAEQTLKFTKELGKFTDLRVSLLVGGDSMEDQFEELTKGPDVIIATPGRLMHLLSEVDDMTLRTVEYVVFDEADSLFGMGFAEQLHQILTQLSENRQTLLFSATLPSALAEFAKAGLREPQLVRLDVENKISPDLKLSFLTVRPEEKYSALLYLVREHISSDQQTLIFVSTKHHVEFVNSLFKLENIEPSVCYGDMDQDARKIHVSRFRARKTMLLIVTDIAARGIDIPLLDNVINWDFPPRPKIFVHRVGRAARAGRTGCAYSFVTPEDMPYMLDLHLFLSKPVRPAPTEDEVLKNMEEVMTKTSQAIDSGVTVYGRFPQKTIDLIFNRTREMIDSSAELDSLERTSTKAFRLYSKTKPSPSKESIRRAKDLPREGLHPIFRSIIETGELEAMSFFQKIKNFRPKQTILEAEGEVAKSKHVKGPAGQWVDVMKKKRAIHEEIINTRHQQNQKTSNNHLEMEAEPTTSFVDGTVEGSKVSGKKRKAQETFKDDEFFISSIPVNHHSEAGLSLRGNEGFGSNRLDAAVLDLVADDGQGIKQQQSNYHWDKKGKKYIKLNNGDRVTASGKIKTESGAKATAKKTGIYKRWQERSHKKVSRDSGDADETTRMSGRGGRDGKRRQGSVPNAHVRSEIKDLDQVRKERQQKANKVSYLQSKRGGRGGRGGARGGRGGGARGGRGGSRDFGGGGRDFGSSSDRGGRSGGRDFGGRRGGASTSSRGGKRGGGRGGGGKRGRGR</sequence>
<protein>
    <recommendedName>
        <fullName>Putative DEAD-box ATP-dependent RNA helicase 29</fullName>
        <ecNumber>3.6.4.13</ecNumber>
    </recommendedName>
</protein>
<accession>O49289</accession>
<gene>
    <name type="primary">RH29</name>
    <name type="ordered locus">At1g77030</name>
    <name type="ORF">F22K20.13</name>
</gene>
<keyword id="KW-0067">ATP-binding</keyword>
<keyword id="KW-0347">Helicase</keyword>
<keyword id="KW-0378">Hydrolase</keyword>
<keyword id="KW-0547">Nucleotide-binding</keyword>
<keyword id="KW-1185">Reference proteome</keyword>
<keyword id="KW-0694">RNA-binding</keyword>
<proteinExistence type="inferred from homology"/>
<evidence type="ECO:0000255" key="1">
    <source>
        <dbReference type="PROSITE-ProRule" id="PRU00541"/>
    </source>
</evidence>
<evidence type="ECO:0000255" key="2">
    <source>
        <dbReference type="PROSITE-ProRule" id="PRU00542"/>
    </source>
</evidence>
<evidence type="ECO:0000256" key="3">
    <source>
        <dbReference type="SAM" id="MobiDB-lite"/>
    </source>
</evidence>
<evidence type="ECO:0000305" key="4"/>
<comment type="catalytic activity">
    <reaction>
        <text>ATP + H2O = ADP + phosphate + H(+)</text>
        <dbReference type="Rhea" id="RHEA:13065"/>
        <dbReference type="ChEBI" id="CHEBI:15377"/>
        <dbReference type="ChEBI" id="CHEBI:15378"/>
        <dbReference type="ChEBI" id="CHEBI:30616"/>
        <dbReference type="ChEBI" id="CHEBI:43474"/>
        <dbReference type="ChEBI" id="CHEBI:456216"/>
        <dbReference type="EC" id="3.6.4.13"/>
    </reaction>
</comment>
<comment type="domain">
    <text>The Q motif is unique to and characteristic of the DEAD box family of RNA helicases and controls ATP binding and hydrolysis.</text>
</comment>
<comment type="similarity">
    <text evidence="4">Belongs to the DEAD box helicase family. DDX54/DBP10 subfamily.</text>
</comment>